<evidence type="ECO:0000250" key="1"/>
<evidence type="ECO:0000255" key="2">
    <source>
        <dbReference type="PROSITE-ProRule" id="PRU00108"/>
    </source>
</evidence>
<evidence type="ECO:0000255" key="3">
    <source>
        <dbReference type="PROSITE-ProRule" id="PRU00125"/>
    </source>
</evidence>
<evidence type="ECO:0000256" key="4">
    <source>
        <dbReference type="SAM" id="MobiDB-lite"/>
    </source>
</evidence>
<evidence type="ECO:0000269" key="5">
    <source>
    </source>
</evidence>
<evidence type="ECO:0000269" key="6">
    <source>
    </source>
</evidence>
<evidence type="ECO:0007744" key="7">
    <source>
    </source>
</evidence>
<proteinExistence type="evidence at protein level"/>
<organism>
    <name type="scientific">Rattus norvegicus</name>
    <name type="common">Rat</name>
    <dbReference type="NCBI Taxonomy" id="10116"/>
    <lineage>
        <taxon>Eukaryota</taxon>
        <taxon>Metazoa</taxon>
        <taxon>Chordata</taxon>
        <taxon>Craniata</taxon>
        <taxon>Vertebrata</taxon>
        <taxon>Euteleostomi</taxon>
        <taxon>Mammalia</taxon>
        <taxon>Eutheria</taxon>
        <taxon>Euarchontoglires</taxon>
        <taxon>Glires</taxon>
        <taxon>Rodentia</taxon>
        <taxon>Myomorpha</taxon>
        <taxon>Muroidea</taxon>
        <taxon>Muridae</taxon>
        <taxon>Murinae</taxon>
        <taxon>Rattus</taxon>
    </lineage>
</organism>
<accession>P63007</accession>
<accession>P36199</accession>
<sequence length="406" mass="44780">MVHCAGCKRPILDRFLLNVLDRAWHVKCVQCCECKCNLTEKCFSREGKLYCKNDFFRCFGTKCAGCAQGISPSDLVRRARSKVFHLNCFTCMMCNKQLSTGEELYIIDENKFVCKEDYLSNSSVAKENSLHSATTGSDPSLSPDSQDPSQDDAKDSESANVSDKEGGSNENDDQNLGAKRRGPRTTIKAKQLETLKAAFAATPKPTRHIREQLAQETGLNMRVIQVWFQNRRSKERRMKQLSALGARRHAFFRSPRRMRPLVDRLEPGELIPNGPFSFYGDYQSEYYGPGGNYDFFPQGPPSSQAQTPVDLPFVPSSGPSGTPLGGLDHPLPGHHPSSEAQRFTDILAHPPGDSPSPEPSLPGPLHSMSAEVFGPSPPFSSLSVNGGASYGNHLSHPPEMNEAAVW</sequence>
<name>LHX1_RAT</name>
<comment type="function">
    <text evidence="1">Potential transcription factor. May play a role in early mesoderm formation and later in lateral mesoderm differentiation and neurogenesis (By similarity).</text>
</comment>
<comment type="subunit">
    <text evidence="1">Interacts with LDB1 via the tandem LIM domains.</text>
</comment>
<comment type="subcellular location">
    <subcellularLocation>
        <location evidence="2 5 6">Nucleus</location>
    </subcellularLocation>
</comment>
<comment type="tissue specificity">
    <text evidence="5 6">Expressed in epithelial structures of the embryonic metanephric kidneys including the ureteric bud and its derivatives, and coma-shaped and S-shaped bodies differentiating from the metanephric mesenchyme. In the adult brain, expressed in the adrenal medulla, Purkinje cells of the cerebellum, hypothalamus, midbrain and pons. Also expressed in the adult testis.</text>
</comment>
<comment type="domain">
    <text evidence="1">The LIM domains exert a negative regulatory function and disruption of the LIM domains produces an activated form. In addition, two activation domains and a negative regulatory domain exist C-terminally to the homeobox (By similarity).</text>
</comment>
<dbReference type="EMBL" id="S71523">
    <property type="protein sequence ID" value="AAC60696.1"/>
    <property type="molecule type" value="mRNA"/>
</dbReference>
<dbReference type="RefSeq" id="NP_665887.3">
    <property type="nucleotide sequence ID" value="NM_145880.4"/>
</dbReference>
<dbReference type="SMR" id="P63007"/>
<dbReference type="FunCoup" id="P63007">
    <property type="interactions" value="24"/>
</dbReference>
<dbReference type="STRING" id="10116.ENSRNOP00000003799"/>
<dbReference type="iPTMnet" id="P63007"/>
<dbReference type="PhosphoSitePlus" id="P63007"/>
<dbReference type="PaxDb" id="10116-ENSRNOP00000003799"/>
<dbReference type="Ensembl" id="ENSRNOT00000003799.4">
    <property type="protein sequence ID" value="ENSRNOP00000003799.2"/>
    <property type="gene ID" value="ENSRNOG00000002812.4"/>
</dbReference>
<dbReference type="GeneID" id="257634"/>
<dbReference type="KEGG" id="rno:257634"/>
<dbReference type="AGR" id="RGD:71074"/>
<dbReference type="CTD" id="3975"/>
<dbReference type="RGD" id="71074">
    <property type="gene designation" value="Lhx1"/>
</dbReference>
<dbReference type="eggNOG" id="KOG0490">
    <property type="taxonomic scope" value="Eukaryota"/>
</dbReference>
<dbReference type="GeneTree" id="ENSGT00940000160834"/>
<dbReference type="HOGENOM" id="CLU_027802_3_1_1"/>
<dbReference type="InParanoid" id="P63007"/>
<dbReference type="OMA" id="NDQQFYP"/>
<dbReference type="OrthoDB" id="10068367at2759"/>
<dbReference type="PhylomeDB" id="P63007"/>
<dbReference type="TreeFam" id="TF315442"/>
<dbReference type="PRO" id="PR:P63007"/>
<dbReference type="Proteomes" id="UP000002494">
    <property type="component" value="Chromosome 10"/>
</dbReference>
<dbReference type="Bgee" id="ENSRNOG00000002812">
    <property type="expression patterns" value="Expressed in cerebellum and 3 other cell types or tissues"/>
</dbReference>
<dbReference type="GO" id="GO:0005634">
    <property type="term" value="C:nucleus"/>
    <property type="evidence" value="ECO:0000314"/>
    <property type="project" value="UniProtKB"/>
</dbReference>
<dbReference type="GO" id="GO:0032991">
    <property type="term" value="C:protein-containing complex"/>
    <property type="evidence" value="ECO:0000250"/>
    <property type="project" value="UniProtKB"/>
</dbReference>
<dbReference type="GO" id="GO:0005667">
    <property type="term" value="C:transcription regulator complex"/>
    <property type="evidence" value="ECO:0000266"/>
    <property type="project" value="RGD"/>
</dbReference>
<dbReference type="GO" id="GO:0000987">
    <property type="term" value="F:cis-regulatory region sequence-specific DNA binding"/>
    <property type="evidence" value="ECO:0000266"/>
    <property type="project" value="RGD"/>
</dbReference>
<dbReference type="GO" id="GO:0003700">
    <property type="term" value="F:DNA-binding transcription factor activity"/>
    <property type="evidence" value="ECO:0000250"/>
    <property type="project" value="UniProtKB"/>
</dbReference>
<dbReference type="GO" id="GO:0000981">
    <property type="term" value="F:DNA-binding transcription factor activity, RNA polymerase II-specific"/>
    <property type="evidence" value="ECO:0000318"/>
    <property type="project" value="GO_Central"/>
</dbReference>
<dbReference type="GO" id="GO:0000977">
    <property type="term" value="F:RNA polymerase II transcription regulatory region sequence-specific DNA binding"/>
    <property type="evidence" value="ECO:0000318"/>
    <property type="project" value="GO_Central"/>
</dbReference>
<dbReference type="GO" id="GO:1990837">
    <property type="term" value="F:sequence-specific double-stranded DNA binding"/>
    <property type="evidence" value="ECO:0000266"/>
    <property type="project" value="RGD"/>
</dbReference>
<dbReference type="GO" id="GO:0008270">
    <property type="term" value="F:zinc ion binding"/>
    <property type="evidence" value="ECO:0007669"/>
    <property type="project" value="InterPro"/>
</dbReference>
<dbReference type="GO" id="GO:0048646">
    <property type="term" value="P:anatomical structure formation involved in morphogenesis"/>
    <property type="evidence" value="ECO:0000250"/>
    <property type="project" value="UniProtKB"/>
</dbReference>
<dbReference type="GO" id="GO:0009653">
    <property type="term" value="P:anatomical structure morphogenesis"/>
    <property type="evidence" value="ECO:0000250"/>
    <property type="project" value="UniProtKB"/>
</dbReference>
<dbReference type="GO" id="GO:0009948">
    <property type="term" value="P:anterior/posterior axis specification"/>
    <property type="evidence" value="ECO:0000250"/>
    <property type="project" value="UniProtKB"/>
</dbReference>
<dbReference type="GO" id="GO:0009952">
    <property type="term" value="P:anterior/posterior pattern specification"/>
    <property type="evidence" value="ECO:0000250"/>
    <property type="project" value="UniProtKB"/>
</dbReference>
<dbReference type="GO" id="GO:0001658">
    <property type="term" value="P:branching involved in ureteric bud morphogenesis"/>
    <property type="evidence" value="ECO:0000266"/>
    <property type="project" value="RGD"/>
</dbReference>
<dbReference type="GO" id="GO:0030154">
    <property type="term" value="P:cell differentiation"/>
    <property type="evidence" value="ECO:0000266"/>
    <property type="project" value="RGD"/>
</dbReference>
<dbReference type="GO" id="GO:0007267">
    <property type="term" value="P:cell-cell signaling"/>
    <property type="evidence" value="ECO:0000250"/>
    <property type="project" value="UniProtKB"/>
</dbReference>
<dbReference type="GO" id="GO:0044344">
    <property type="term" value="P:cellular response to fibroblast growth factor stimulus"/>
    <property type="evidence" value="ECO:0000270"/>
    <property type="project" value="UniProtKB"/>
</dbReference>
<dbReference type="GO" id="GO:0021702">
    <property type="term" value="P:cerebellar Purkinje cell differentiation"/>
    <property type="evidence" value="ECO:0000250"/>
    <property type="project" value="UniProtKB"/>
</dbReference>
<dbReference type="GO" id="GO:0021937">
    <property type="term" value="P:cerebellar Purkinje cell-granule cell precursor cell signaling"/>
    <property type="evidence" value="ECO:0000250"/>
    <property type="project" value="UniProtKB"/>
</dbReference>
<dbReference type="GO" id="GO:0021549">
    <property type="term" value="P:cerebellum development"/>
    <property type="evidence" value="ECO:0000250"/>
    <property type="project" value="UniProtKB"/>
</dbReference>
<dbReference type="GO" id="GO:0060067">
    <property type="term" value="P:cervix development"/>
    <property type="evidence" value="ECO:0000250"/>
    <property type="project" value="UniProtKB"/>
</dbReference>
<dbReference type="GO" id="GO:0072049">
    <property type="term" value="P:comma-shaped body morphogenesis"/>
    <property type="evidence" value="ECO:0000250"/>
    <property type="project" value="UniProtKB"/>
</dbReference>
<dbReference type="GO" id="GO:0009953">
    <property type="term" value="P:dorsal/ventral pattern formation"/>
    <property type="evidence" value="ECO:0000250"/>
    <property type="project" value="UniProtKB"/>
</dbReference>
<dbReference type="GO" id="GO:0001705">
    <property type="term" value="P:ectoderm formation"/>
    <property type="evidence" value="ECO:0000250"/>
    <property type="project" value="UniProtKB"/>
</dbReference>
<dbReference type="GO" id="GO:0009880">
    <property type="term" value="P:embryonic pattern specification"/>
    <property type="evidence" value="ECO:0000250"/>
    <property type="project" value="UniProtKB"/>
</dbReference>
<dbReference type="GO" id="GO:0060059">
    <property type="term" value="P:embryonic retina morphogenesis in camera-type eye"/>
    <property type="evidence" value="ECO:0000250"/>
    <property type="project" value="UniProtKB"/>
</dbReference>
<dbReference type="GO" id="GO:0048703">
    <property type="term" value="P:embryonic viscerocranium morphogenesis"/>
    <property type="evidence" value="ECO:0000250"/>
    <property type="project" value="UniProtKB"/>
</dbReference>
<dbReference type="GO" id="GO:0007492">
    <property type="term" value="P:endoderm development"/>
    <property type="evidence" value="ECO:0000266"/>
    <property type="project" value="RGD"/>
</dbReference>
<dbReference type="GO" id="GO:0001706">
    <property type="term" value="P:endoderm formation"/>
    <property type="evidence" value="ECO:0000250"/>
    <property type="project" value="UniProtKB"/>
</dbReference>
<dbReference type="GO" id="GO:0060429">
    <property type="term" value="P:epithelium development"/>
    <property type="evidence" value="ECO:0000250"/>
    <property type="project" value="UniProtKB"/>
</dbReference>
<dbReference type="GO" id="GO:0021871">
    <property type="term" value="P:forebrain regionalization"/>
    <property type="evidence" value="ECO:0000250"/>
    <property type="project" value="UniProtKB"/>
</dbReference>
<dbReference type="GO" id="GO:0001702">
    <property type="term" value="P:gastrulation with mouth forming second"/>
    <property type="evidence" value="ECO:0000250"/>
    <property type="project" value="UniProtKB"/>
</dbReference>
<dbReference type="GO" id="GO:0060322">
    <property type="term" value="P:head development"/>
    <property type="evidence" value="ECO:0000250"/>
    <property type="project" value="UniProtKB"/>
</dbReference>
<dbReference type="GO" id="GO:0001822">
    <property type="term" value="P:kidney development"/>
    <property type="evidence" value="ECO:0000250"/>
    <property type="project" value="UniProtKB"/>
</dbReference>
<dbReference type="GO" id="GO:0097477">
    <property type="term" value="P:lateral motor column neuron migration"/>
    <property type="evidence" value="ECO:0000250"/>
    <property type="project" value="UniProtKB"/>
</dbReference>
<dbReference type="GO" id="GO:0048382">
    <property type="term" value="P:mesendoderm development"/>
    <property type="evidence" value="ECO:0000266"/>
    <property type="project" value="RGD"/>
</dbReference>
<dbReference type="GO" id="GO:0072177">
    <property type="term" value="P:mesonephric duct development"/>
    <property type="evidence" value="ECO:0000270"/>
    <property type="project" value="UniProtKB"/>
</dbReference>
<dbReference type="GO" id="GO:0072164">
    <property type="term" value="P:mesonephric tubule development"/>
    <property type="evidence" value="ECO:0000270"/>
    <property type="project" value="UniProtKB"/>
</dbReference>
<dbReference type="GO" id="GO:0001823">
    <property type="term" value="P:mesonephros development"/>
    <property type="evidence" value="ECO:0000266"/>
    <property type="project" value="RGD"/>
</dbReference>
<dbReference type="GO" id="GO:0072278">
    <property type="term" value="P:metanephric comma-shaped body morphogenesis"/>
    <property type="evidence" value="ECO:0000270"/>
    <property type="project" value="UniProtKB"/>
</dbReference>
<dbReference type="GO" id="GO:0072224">
    <property type="term" value="P:metanephric glomerulus development"/>
    <property type="evidence" value="ECO:0000270"/>
    <property type="project" value="UniProtKB"/>
</dbReference>
<dbReference type="GO" id="GO:0035502">
    <property type="term" value="P:metanephric part of ureteric bud development"/>
    <property type="evidence" value="ECO:0000270"/>
    <property type="project" value="UniProtKB"/>
</dbReference>
<dbReference type="GO" id="GO:0072283">
    <property type="term" value="P:metanephric renal vesicle morphogenesis"/>
    <property type="evidence" value="ECO:0000266"/>
    <property type="project" value="RGD"/>
</dbReference>
<dbReference type="GO" id="GO:0072284">
    <property type="term" value="P:metanephric S-shaped body morphogenesis"/>
    <property type="evidence" value="ECO:0000270"/>
    <property type="project" value="UniProtKB"/>
</dbReference>
<dbReference type="GO" id="GO:0001656">
    <property type="term" value="P:metanephros development"/>
    <property type="evidence" value="ECO:0000266"/>
    <property type="project" value="RGD"/>
</dbReference>
<dbReference type="GO" id="GO:0008045">
    <property type="term" value="P:motor neuron axon guidance"/>
    <property type="evidence" value="ECO:0000250"/>
    <property type="project" value="UniProtKB"/>
</dbReference>
<dbReference type="GO" id="GO:0045892">
    <property type="term" value="P:negative regulation of DNA-templated transcription"/>
    <property type="evidence" value="ECO:0000250"/>
    <property type="project" value="UniProtKB"/>
</dbReference>
<dbReference type="GO" id="GO:0035849">
    <property type="term" value="P:nephric duct elongation"/>
    <property type="evidence" value="ECO:0000266"/>
    <property type="project" value="RGD"/>
</dbReference>
<dbReference type="GO" id="GO:0072178">
    <property type="term" value="P:nephric duct morphogenesis"/>
    <property type="evidence" value="ECO:0000250"/>
    <property type="project" value="UniProtKB"/>
</dbReference>
<dbReference type="GO" id="GO:0030182">
    <property type="term" value="P:neuron differentiation"/>
    <property type="evidence" value="ECO:0000318"/>
    <property type="project" value="GO_Central"/>
</dbReference>
<dbReference type="GO" id="GO:0060066">
    <property type="term" value="P:oviduct development"/>
    <property type="evidence" value="ECO:0000250"/>
    <property type="project" value="UniProtKB"/>
</dbReference>
<dbReference type="GO" id="GO:0035846">
    <property type="term" value="P:oviduct epithelium development"/>
    <property type="evidence" value="ECO:0000250"/>
    <property type="project" value="UniProtKB"/>
</dbReference>
<dbReference type="GO" id="GO:0061205">
    <property type="term" value="P:paramesonephric duct development"/>
    <property type="evidence" value="ECO:0000250"/>
    <property type="project" value="UniProtKB"/>
</dbReference>
<dbReference type="GO" id="GO:0007389">
    <property type="term" value="P:pattern specification process"/>
    <property type="evidence" value="ECO:0000250"/>
    <property type="project" value="UniProtKB"/>
</dbReference>
<dbReference type="GO" id="GO:2000744">
    <property type="term" value="P:positive regulation of anterior head development"/>
    <property type="evidence" value="ECO:0000250"/>
    <property type="project" value="UniProtKB"/>
</dbReference>
<dbReference type="GO" id="GO:0090190">
    <property type="term" value="P:positive regulation of branching involved in ureteric bud morphogenesis"/>
    <property type="evidence" value="ECO:0000250"/>
    <property type="project" value="UniProtKB"/>
</dbReference>
<dbReference type="GO" id="GO:0045893">
    <property type="term" value="P:positive regulation of DNA-templated transcription"/>
    <property type="evidence" value="ECO:0000250"/>
    <property type="project" value="UniProtKB"/>
</dbReference>
<dbReference type="GO" id="GO:0040019">
    <property type="term" value="P:positive regulation of embryonic development"/>
    <property type="evidence" value="ECO:0000250"/>
    <property type="project" value="UniProtKB"/>
</dbReference>
<dbReference type="GO" id="GO:2000543">
    <property type="term" value="P:positive regulation of gastrulation"/>
    <property type="evidence" value="ECO:0000250"/>
    <property type="project" value="UniProtKB"/>
</dbReference>
<dbReference type="GO" id="GO:2000768">
    <property type="term" value="P:positive regulation of nephron tubule epithelial cell differentiation"/>
    <property type="evidence" value="ECO:0000250"/>
    <property type="project" value="UniProtKB"/>
</dbReference>
<dbReference type="GO" id="GO:0009791">
    <property type="term" value="P:post-embryonic development"/>
    <property type="evidence" value="ECO:0000250"/>
    <property type="project" value="UniProtKB"/>
</dbReference>
<dbReference type="GO" id="GO:0090009">
    <property type="term" value="P:primitive streak formation"/>
    <property type="evidence" value="ECO:0000250"/>
    <property type="project" value="UniProtKB"/>
</dbReference>
<dbReference type="GO" id="GO:0048793">
    <property type="term" value="P:pronephros development"/>
    <property type="evidence" value="ECO:0000266"/>
    <property type="project" value="RGD"/>
</dbReference>
<dbReference type="GO" id="GO:0010468">
    <property type="term" value="P:regulation of gene expression"/>
    <property type="evidence" value="ECO:0000250"/>
    <property type="project" value="UniProtKB"/>
</dbReference>
<dbReference type="GO" id="GO:0006357">
    <property type="term" value="P:regulation of transcription by RNA polymerase II"/>
    <property type="evidence" value="ECO:0000318"/>
    <property type="project" value="GO_Central"/>
</dbReference>
<dbReference type="GO" id="GO:0072077">
    <property type="term" value="P:renal vesicle morphogenesis"/>
    <property type="evidence" value="ECO:0000250"/>
    <property type="project" value="UniProtKB"/>
</dbReference>
<dbReference type="GO" id="GO:0060041">
    <property type="term" value="P:retina development in camera-type eye"/>
    <property type="evidence" value="ECO:0000266"/>
    <property type="project" value="RGD"/>
</dbReference>
<dbReference type="GO" id="GO:0010842">
    <property type="term" value="P:retina layer formation"/>
    <property type="evidence" value="ECO:0000250"/>
    <property type="project" value="UniProtKB"/>
</dbReference>
<dbReference type="GO" id="GO:0072050">
    <property type="term" value="P:S-shaped body morphogenesis"/>
    <property type="evidence" value="ECO:0000250"/>
    <property type="project" value="UniProtKB"/>
</dbReference>
<dbReference type="GO" id="GO:0032525">
    <property type="term" value="P:somite rostral/caudal axis specification"/>
    <property type="evidence" value="ECO:0000266"/>
    <property type="project" value="RGD"/>
</dbReference>
<dbReference type="GO" id="GO:0021527">
    <property type="term" value="P:spinal cord association neuron differentiation"/>
    <property type="evidence" value="ECO:0000250"/>
    <property type="project" value="UniProtKB"/>
</dbReference>
<dbReference type="GO" id="GO:0021510">
    <property type="term" value="P:spinal cord development"/>
    <property type="evidence" value="ECO:0000266"/>
    <property type="project" value="RGD"/>
</dbReference>
<dbReference type="GO" id="GO:0021537">
    <property type="term" value="P:telencephalon development"/>
    <property type="evidence" value="ECO:0000266"/>
    <property type="project" value="RGD"/>
</dbReference>
<dbReference type="GO" id="GO:0006366">
    <property type="term" value="P:transcription by RNA polymerase II"/>
    <property type="evidence" value="ECO:0000250"/>
    <property type="project" value="UniProtKB"/>
</dbReference>
<dbReference type="GO" id="GO:0072197">
    <property type="term" value="P:ureter morphogenesis"/>
    <property type="evidence" value="ECO:0000266"/>
    <property type="project" value="RGD"/>
</dbReference>
<dbReference type="GO" id="GO:0001657">
    <property type="term" value="P:ureteric bud development"/>
    <property type="evidence" value="ECO:0000250"/>
    <property type="project" value="UniProtKB"/>
</dbReference>
<dbReference type="GO" id="GO:0001655">
    <property type="term" value="P:urogenital system development"/>
    <property type="evidence" value="ECO:0000250"/>
    <property type="project" value="UniProtKB"/>
</dbReference>
<dbReference type="GO" id="GO:0035847">
    <property type="term" value="P:uterine epithelium development"/>
    <property type="evidence" value="ECO:0000250"/>
    <property type="project" value="UniProtKB"/>
</dbReference>
<dbReference type="GO" id="GO:0060065">
    <property type="term" value="P:uterus development"/>
    <property type="evidence" value="ECO:0000250"/>
    <property type="project" value="UniProtKB"/>
</dbReference>
<dbReference type="GO" id="GO:0060068">
    <property type="term" value="P:vagina development"/>
    <property type="evidence" value="ECO:0000250"/>
    <property type="project" value="UniProtKB"/>
</dbReference>
<dbReference type="GO" id="GO:0021517">
    <property type="term" value="P:ventral spinal cord development"/>
    <property type="evidence" value="ECO:0000266"/>
    <property type="project" value="RGD"/>
</dbReference>
<dbReference type="CDD" id="cd00086">
    <property type="entry name" value="homeodomain"/>
    <property type="match status" value="1"/>
</dbReference>
<dbReference type="CDD" id="cd09367">
    <property type="entry name" value="LIM1_Lhx1_Lhx5"/>
    <property type="match status" value="1"/>
</dbReference>
<dbReference type="CDD" id="cd09375">
    <property type="entry name" value="LIM2_Lhx1_Lhx5"/>
    <property type="match status" value="1"/>
</dbReference>
<dbReference type="FunFam" id="2.10.110.10:FF:000120">
    <property type="entry name" value="Insulin gene enhancer protein ISL-2"/>
    <property type="match status" value="1"/>
</dbReference>
<dbReference type="FunFam" id="1.10.10.60:FF:000075">
    <property type="entry name" value="LIM/homeobox protein Lhx1"/>
    <property type="match status" value="1"/>
</dbReference>
<dbReference type="FunFam" id="2.10.110.10:FF:000046">
    <property type="entry name" value="LIM/homeobox protein Lhx1"/>
    <property type="match status" value="1"/>
</dbReference>
<dbReference type="Gene3D" id="2.10.110.10">
    <property type="entry name" value="Cysteine Rich Protein"/>
    <property type="match status" value="2"/>
</dbReference>
<dbReference type="Gene3D" id="1.10.10.60">
    <property type="entry name" value="Homeodomain-like"/>
    <property type="match status" value="1"/>
</dbReference>
<dbReference type="InterPro" id="IPR001356">
    <property type="entry name" value="HD"/>
</dbReference>
<dbReference type="InterPro" id="IPR017970">
    <property type="entry name" value="Homeobox_CS"/>
</dbReference>
<dbReference type="InterPro" id="IPR009057">
    <property type="entry name" value="Homeodomain-like_sf"/>
</dbReference>
<dbReference type="InterPro" id="IPR049618">
    <property type="entry name" value="Lhx1/5_LIM1"/>
</dbReference>
<dbReference type="InterPro" id="IPR049619">
    <property type="entry name" value="Lhx1/5_LIM2"/>
</dbReference>
<dbReference type="InterPro" id="IPR050453">
    <property type="entry name" value="LIM_Homeobox_TF"/>
</dbReference>
<dbReference type="InterPro" id="IPR001781">
    <property type="entry name" value="Znf_LIM"/>
</dbReference>
<dbReference type="PANTHER" id="PTHR24208">
    <property type="entry name" value="LIM/HOMEOBOX PROTEIN LHX"/>
    <property type="match status" value="1"/>
</dbReference>
<dbReference type="PANTHER" id="PTHR24208:SF106">
    <property type="entry name" value="LIM_HOMEOBOX PROTEIN LHX1"/>
    <property type="match status" value="1"/>
</dbReference>
<dbReference type="Pfam" id="PF00046">
    <property type="entry name" value="Homeodomain"/>
    <property type="match status" value="1"/>
</dbReference>
<dbReference type="Pfam" id="PF00412">
    <property type="entry name" value="LIM"/>
    <property type="match status" value="2"/>
</dbReference>
<dbReference type="SMART" id="SM00389">
    <property type="entry name" value="HOX"/>
    <property type="match status" value="1"/>
</dbReference>
<dbReference type="SMART" id="SM00132">
    <property type="entry name" value="LIM"/>
    <property type="match status" value="2"/>
</dbReference>
<dbReference type="SUPFAM" id="SSF57716">
    <property type="entry name" value="Glucocorticoid receptor-like (DNA-binding domain)"/>
    <property type="match status" value="2"/>
</dbReference>
<dbReference type="SUPFAM" id="SSF46689">
    <property type="entry name" value="Homeodomain-like"/>
    <property type="match status" value="1"/>
</dbReference>
<dbReference type="PROSITE" id="PS00027">
    <property type="entry name" value="HOMEOBOX_1"/>
    <property type="match status" value="1"/>
</dbReference>
<dbReference type="PROSITE" id="PS50071">
    <property type="entry name" value="HOMEOBOX_2"/>
    <property type="match status" value="1"/>
</dbReference>
<dbReference type="PROSITE" id="PS00478">
    <property type="entry name" value="LIM_DOMAIN_1"/>
    <property type="match status" value="2"/>
</dbReference>
<dbReference type="PROSITE" id="PS50023">
    <property type="entry name" value="LIM_DOMAIN_2"/>
    <property type="match status" value="2"/>
</dbReference>
<gene>
    <name type="primary">Lhx1</name>
    <name type="synonym">Lim-1</name>
    <name type="synonym">Lim1</name>
</gene>
<protein>
    <recommendedName>
        <fullName>LIM/homeobox protein Lhx1</fullName>
        <shortName>LIM homeobox protein 1</shortName>
    </recommendedName>
    <alternativeName>
        <fullName>Homeobox protein Lim-1</fullName>
        <shortName>Rlim</shortName>
    </alternativeName>
</protein>
<reference key="1">
    <citation type="journal article" date="1994" name="Neurosci. Lett.">
        <title>Distribution of Rlim, an LIM homeodomain gene, in the rat brain.</title>
        <authorList>
            <person name="Furuyama T."/>
            <person name="Inagaki S."/>
            <person name="Iwahashi Y."/>
            <person name="Takagi H."/>
        </authorList>
    </citation>
    <scope>NUCLEOTIDE SEQUENCE [MRNA]</scope>
    <scope>SUBCELLULAR LOCATION</scope>
    <scope>TISSUE SPECIFICITY</scope>
    <source>
        <tissue>Brain</tissue>
    </source>
</reference>
<reference key="2">
    <citation type="journal article" date="1996" name="Int. J. Dev. Biol.">
        <title>The LIM homeodomain protein Lim-1 is widely expressed in neural, neural crest and mesoderm derivatives in vertebrate development.</title>
        <authorList>
            <person name="Karavanov A.A."/>
            <person name="Saint-Jeannet J.P."/>
            <person name="Karavanova I."/>
            <person name="Taira M."/>
            <person name="Dawid I.B."/>
        </authorList>
    </citation>
    <scope>SUBCELLULAR LOCATION</scope>
    <scope>TISSUE SPECIFICITY</scope>
</reference>
<reference key="3">
    <citation type="journal article" date="2012" name="Nat. Commun.">
        <title>Quantitative maps of protein phosphorylation sites across 14 different rat organs and tissues.</title>
        <authorList>
            <person name="Lundby A."/>
            <person name="Secher A."/>
            <person name="Lage K."/>
            <person name="Nordsborg N.B."/>
            <person name="Dmytriyev A."/>
            <person name="Lundby C."/>
            <person name="Olsen J.V."/>
        </authorList>
    </citation>
    <scope>PHOSPHORYLATION [LARGE SCALE ANALYSIS] AT SER-162</scope>
    <scope>IDENTIFICATION BY MASS SPECTROMETRY [LARGE SCALE ANALYSIS]</scope>
</reference>
<keyword id="KW-0217">Developmental protein</keyword>
<keyword id="KW-0221">Differentiation</keyword>
<keyword id="KW-0238">DNA-binding</keyword>
<keyword id="KW-0371">Homeobox</keyword>
<keyword id="KW-0440">LIM domain</keyword>
<keyword id="KW-0479">Metal-binding</keyword>
<keyword id="KW-0524">Neurogenesis</keyword>
<keyword id="KW-0539">Nucleus</keyword>
<keyword id="KW-0597">Phosphoprotein</keyword>
<keyword id="KW-1185">Reference proteome</keyword>
<keyword id="KW-0677">Repeat</keyword>
<keyword id="KW-0804">Transcription</keyword>
<keyword id="KW-0805">Transcription regulation</keyword>
<keyword id="KW-0862">Zinc</keyword>
<feature type="chain" id="PRO_0000075773" description="LIM/homeobox protein Lhx1">
    <location>
        <begin position="1"/>
        <end position="406"/>
    </location>
</feature>
<feature type="domain" description="LIM zinc-binding 1" evidence="3">
    <location>
        <begin position="4"/>
        <end position="54"/>
    </location>
</feature>
<feature type="domain" description="LIM zinc-binding 2" evidence="3">
    <location>
        <begin position="63"/>
        <end position="117"/>
    </location>
</feature>
<feature type="DNA-binding region" description="Homeobox" evidence="2">
    <location>
        <begin position="180"/>
        <end position="239"/>
    </location>
</feature>
<feature type="region of interest" description="Disordered" evidence="4">
    <location>
        <begin position="128"/>
        <end position="189"/>
    </location>
</feature>
<feature type="region of interest" description="Disordered" evidence="4">
    <location>
        <begin position="294"/>
        <end position="372"/>
    </location>
</feature>
<feature type="compositionally biased region" description="Low complexity" evidence="4">
    <location>
        <begin position="137"/>
        <end position="148"/>
    </location>
</feature>
<feature type="compositionally biased region" description="Basic and acidic residues" evidence="4">
    <location>
        <begin position="151"/>
        <end position="167"/>
    </location>
</feature>
<feature type="compositionally biased region" description="Low complexity" evidence="4">
    <location>
        <begin position="315"/>
        <end position="327"/>
    </location>
</feature>
<feature type="compositionally biased region" description="Pro residues" evidence="4">
    <location>
        <begin position="352"/>
        <end position="362"/>
    </location>
</feature>
<feature type="modified residue" description="Phosphoserine" evidence="7">
    <location>
        <position position="162"/>
    </location>
</feature>